<evidence type="ECO:0000250" key="1"/>
<evidence type="ECO:0000305" key="2"/>
<gene>
    <name type="ordered locus">slr1167</name>
</gene>
<accession>P74246</accession>
<feature type="chain" id="PRO_0000087833" description="Uncharacterized oxidoreductase slr1167">
    <location>
        <begin position="1"/>
        <end position="385"/>
    </location>
</feature>
<feature type="binding site" evidence="1">
    <location>
        <position position="180"/>
    </location>
    <ligand>
        <name>Zn(2+)</name>
        <dbReference type="ChEBI" id="CHEBI:29105"/>
        <note>catalytic</note>
    </ligand>
</feature>
<feature type="binding site" evidence="1">
    <location>
        <position position="258"/>
    </location>
    <ligand>
        <name>Zn(2+)</name>
        <dbReference type="ChEBI" id="CHEBI:29105"/>
        <note>catalytic</note>
    </ligand>
</feature>
<feature type="binding site" evidence="1">
    <location>
        <position position="275"/>
    </location>
    <ligand>
        <name>Zn(2+)</name>
        <dbReference type="ChEBI" id="CHEBI:29105"/>
        <note>catalytic</note>
    </ligand>
</feature>
<sequence>MAPSISPVTQPLVSMAIAPTVVIRSALAKAGEHLQKLGSKGLVVTGSHSAELGEKSLQTLQKNYGLTLPLASYLPDCAESSLEQLRRRVHQEQPDFILGIGGGKALDTAKLLAHQTQLAIATVPTSAATCAGWTALANVYSETGAFRYDVALDRCPDLLIVDYELIQRAEPRLLVAGIGDAIAKWYEASVSSGQSSDTFTVAAVQQARILRDILFQKSAEALAQPGSETWREVVDASLLMAGVIGGLGGANCRTVAAHAVHNGLTQLPQAHHALHGEKVAYGILVQLRLEELVSGNQLAATARRQLLSFYDEIGLPKTLQDLGLGRISLEELRQTAEFTCLPNSDIHRLPFTVTPETLMAAMVSTLVEEQGTRQLFAQIQDNSGL</sequence>
<proteinExistence type="inferred from homology"/>
<protein>
    <recommendedName>
        <fullName>Uncharacterized oxidoreductase slr1167</fullName>
        <ecNumber>1.1.-.-</ecNumber>
    </recommendedName>
</protein>
<comment type="cofactor">
    <cofactor evidence="1">
        <name>Zn(2+)</name>
        <dbReference type="ChEBI" id="CHEBI:29105"/>
    </cofactor>
    <text evidence="1">Binds 1 zinc ion per subunit.</text>
</comment>
<comment type="similarity">
    <text evidence="2">Belongs to the iron-containing alcohol dehydrogenase family.</text>
</comment>
<organism>
    <name type="scientific">Synechocystis sp. (strain ATCC 27184 / PCC 6803 / Kazusa)</name>
    <dbReference type="NCBI Taxonomy" id="1111708"/>
    <lineage>
        <taxon>Bacteria</taxon>
        <taxon>Bacillati</taxon>
        <taxon>Cyanobacteriota</taxon>
        <taxon>Cyanophyceae</taxon>
        <taxon>Synechococcales</taxon>
        <taxon>Merismopediaceae</taxon>
        <taxon>Synechocystis</taxon>
    </lineage>
</organism>
<dbReference type="EC" id="1.1.-.-"/>
<dbReference type="EMBL" id="BA000022">
    <property type="protein sequence ID" value="BAA18340.1"/>
    <property type="molecule type" value="Genomic_DNA"/>
</dbReference>
<dbReference type="PIR" id="S75881">
    <property type="entry name" value="S75881"/>
</dbReference>
<dbReference type="SMR" id="P74246"/>
<dbReference type="IntAct" id="P74246">
    <property type="interactions" value="1"/>
</dbReference>
<dbReference type="STRING" id="1148.gene:10499216"/>
<dbReference type="PaxDb" id="1148-1653426"/>
<dbReference type="EnsemblBacteria" id="BAA18340">
    <property type="protein sequence ID" value="BAA18340"/>
    <property type="gene ID" value="BAA18340"/>
</dbReference>
<dbReference type="KEGG" id="syn:slr1167"/>
<dbReference type="eggNOG" id="COG0371">
    <property type="taxonomic scope" value="Bacteria"/>
</dbReference>
<dbReference type="InParanoid" id="P74246"/>
<dbReference type="PhylomeDB" id="P74246"/>
<dbReference type="Proteomes" id="UP000001425">
    <property type="component" value="Chromosome"/>
</dbReference>
<dbReference type="GO" id="GO:0046872">
    <property type="term" value="F:metal ion binding"/>
    <property type="evidence" value="ECO:0007669"/>
    <property type="project" value="UniProtKB-KW"/>
</dbReference>
<dbReference type="GO" id="GO:0016614">
    <property type="term" value="F:oxidoreductase activity, acting on CH-OH group of donors"/>
    <property type="evidence" value="ECO:0007669"/>
    <property type="project" value="InterPro"/>
</dbReference>
<dbReference type="CDD" id="cd08550">
    <property type="entry name" value="GlyDH-like"/>
    <property type="match status" value="1"/>
</dbReference>
<dbReference type="Gene3D" id="3.40.50.1970">
    <property type="match status" value="1"/>
</dbReference>
<dbReference type="Gene3D" id="1.20.1090.10">
    <property type="entry name" value="Dehydroquinate synthase-like - alpha domain"/>
    <property type="match status" value="1"/>
</dbReference>
<dbReference type="InterPro" id="IPR001670">
    <property type="entry name" value="ADH_Fe/GldA"/>
</dbReference>
<dbReference type="InterPro" id="IPR016205">
    <property type="entry name" value="Glycerol_DH"/>
</dbReference>
<dbReference type="PANTHER" id="PTHR43616">
    <property type="entry name" value="GLYCEROL DEHYDROGENASE"/>
    <property type="match status" value="1"/>
</dbReference>
<dbReference type="PANTHER" id="PTHR43616:SF3">
    <property type="entry name" value="HYDROXYCARBOXYLATE DEHYDROGENASE A"/>
    <property type="match status" value="1"/>
</dbReference>
<dbReference type="Pfam" id="PF00465">
    <property type="entry name" value="Fe-ADH"/>
    <property type="match status" value="1"/>
</dbReference>
<dbReference type="PIRSF" id="PIRSF000112">
    <property type="entry name" value="Glycerol_dehydrogenase"/>
    <property type="match status" value="1"/>
</dbReference>
<dbReference type="SUPFAM" id="SSF56796">
    <property type="entry name" value="Dehydroquinate synthase-like"/>
    <property type="match status" value="1"/>
</dbReference>
<reference key="1">
    <citation type="journal article" date="1996" name="DNA Res.">
        <title>Sequence analysis of the genome of the unicellular cyanobacterium Synechocystis sp. strain PCC6803. II. Sequence determination of the entire genome and assignment of potential protein-coding regions.</title>
        <authorList>
            <person name="Kaneko T."/>
            <person name="Sato S."/>
            <person name="Kotani H."/>
            <person name="Tanaka A."/>
            <person name="Asamizu E."/>
            <person name="Nakamura Y."/>
            <person name="Miyajima N."/>
            <person name="Hirosawa M."/>
            <person name="Sugiura M."/>
            <person name="Sasamoto S."/>
            <person name="Kimura T."/>
            <person name="Hosouchi T."/>
            <person name="Matsuno A."/>
            <person name="Muraki A."/>
            <person name="Nakazaki N."/>
            <person name="Naruo K."/>
            <person name="Okumura S."/>
            <person name="Shimpo S."/>
            <person name="Takeuchi C."/>
            <person name="Wada T."/>
            <person name="Watanabe A."/>
            <person name="Yamada M."/>
            <person name="Yasuda M."/>
            <person name="Tabata S."/>
        </authorList>
    </citation>
    <scope>NUCLEOTIDE SEQUENCE [LARGE SCALE GENOMIC DNA]</scope>
    <source>
        <strain>ATCC 27184 / PCC 6803 / Kazusa</strain>
    </source>
</reference>
<keyword id="KW-0479">Metal-binding</keyword>
<keyword id="KW-0560">Oxidoreductase</keyword>
<keyword id="KW-1185">Reference proteome</keyword>
<keyword id="KW-0862">Zinc</keyword>
<name>Y1167_SYNY3</name>